<protein>
    <recommendedName>
        <fullName evidence="1 5">Na(+)-translocating NADH-quinone reductase subunit A</fullName>
        <shortName evidence="1">Na(+)-NQR subunit A</shortName>
        <shortName evidence="1">Na(+)-translocating NQR subunit A</shortName>
        <ecNumber evidence="1 3">7.2.1.1</ecNumber>
    </recommendedName>
    <alternativeName>
        <fullName evidence="1">NQR complex subunit A</fullName>
    </alternativeName>
    <alternativeName>
        <fullName evidence="1">NQR-1 subunit A</fullName>
    </alternativeName>
</protein>
<comment type="function">
    <text evidence="1 7 8">NQR complex catalyzes the reduction of ubiquinone-1 to ubiquinol by two successive reactions, coupled with the transport of Na(+) ions from the cytoplasm to the periplasm. NqrA to NqrE are probably involved in the second step, the conversion of ubisemiquinone to ubiquinol.</text>
</comment>
<comment type="catalytic activity">
    <reaction evidence="1 3">
        <text>a ubiquinone + n Na(+)(in) + NADH + H(+) = a ubiquinol + n Na(+)(out) + NAD(+)</text>
        <dbReference type="Rhea" id="RHEA:47748"/>
        <dbReference type="Rhea" id="RHEA-COMP:9565"/>
        <dbReference type="Rhea" id="RHEA-COMP:9566"/>
        <dbReference type="ChEBI" id="CHEBI:15378"/>
        <dbReference type="ChEBI" id="CHEBI:16389"/>
        <dbReference type="ChEBI" id="CHEBI:17976"/>
        <dbReference type="ChEBI" id="CHEBI:29101"/>
        <dbReference type="ChEBI" id="CHEBI:57540"/>
        <dbReference type="ChEBI" id="CHEBI:57945"/>
        <dbReference type="EC" id="7.2.1.1"/>
    </reaction>
</comment>
<comment type="activity regulation">
    <text evidence="2">This reaction is tightly coupled to the Na(+) pumping activity and specifically requires Na(+) for activity. Inhibited by korormicin and 2-N-heptyl-4-hydroxyquinoline N-oxide (HQNO).</text>
</comment>
<comment type="subunit">
    <text evidence="1 3">Composed of six subunits; NqrA, NqrB, NqrC, NqrD, NqrE and NqrF.</text>
</comment>
<comment type="similarity">
    <text evidence="1 6">Belongs to the NqrA family.</text>
</comment>
<accession>Q56586</accession>
<name>NQRA_VIBAL</name>
<proteinExistence type="evidence at protein level"/>
<gene>
    <name evidence="1 4" type="primary">nqrA</name>
    <name evidence="5" type="synonym">nqr1</name>
</gene>
<dbReference type="EC" id="7.2.1.1" evidence="1 3"/>
<dbReference type="EMBL" id="Z37111">
    <property type="protein sequence ID" value="CAA85476.1"/>
    <property type="molecule type" value="Genomic_DNA"/>
</dbReference>
<dbReference type="EMBL" id="AB008030">
    <property type="protein sequence ID" value="BAA22910.1"/>
    <property type="molecule type" value="Genomic_DNA"/>
</dbReference>
<dbReference type="PIR" id="S51015">
    <property type="entry name" value="S51015"/>
</dbReference>
<dbReference type="RefSeq" id="WP_041853022.1">
    <property type="nucleotide sequence ID" value="NZ_JAMPYT010000012.1"/>
</dbReference>
<dbReference type="SMR" id="Q56586"/>
<dbReference type="STRING" id="663.BAU10_10840"/>
<dbReference type="TCDB" id="3.D.5.1.1">
    <property type="family name" value="the na(+)-translocating nadh:quinone dehydrogenase (na-ndh or nqr) family"/>
</dbReference>
<dbReference type="eggNOG" id="COG1726">
    <property type="taxonomic scope" value="Bacteria"/>
</dbReference>
<dbReference type="GO" id="GO:0016655">
    <property type="term" value="F:oxidoreductase activity, acting on NAD(P)H, quinone or similar compound as acceptor"/>
    <property type="evidence" value="ECO:0000314"/>
    <property type="project" value="UniProtKB"/>
</dbReference>
<dbReference type="GO" id="GO:0006814">
    <property type="term" value="P:sodium ion transport"/>
    <property type="evidence" value="ECO:0007669"/>
    <property type="project" value="UniProtKB-UniRule"/>
</dbReference>
<dbReference type="HAMAP" id="MF_00425">
    <property type="entry name" value="NqrA"/>
    <property type="match status" value="1"/>
</dbReference>
<dbReference type="InterPro" id="IPR008703">
    <property type="entry name" value="NqrA"/>
</dbReference>
<dbReference type="InterPro" id="IPR056148">
    <property type="entry name" value="NQRA_2nd"/>
</dbReference>
<dbReference type="InterPro" id="IPR022615">
    <property type="entry name" value="NqrA_C_domain"/>
</dbReference>
<dbReference type="InterPro" id="IPR056147">
    <property type="entry name" value="NQRA_N"/>
</dbReference>
<dbReference type="NCBIfam" id="TIGR01936">
    <property type="entry name" value="nqrA"/>
    <property type="match status" value="1"/>
</dbReference>
<dbReference type="NCBIfam" id="NF003759">
    <property type="entry name" value="PRK05352.1-2"/>
    <property type="match status" value="1"/>
</dbReference>
<dbReference type="PANTHER" id="PTHR37839">
    <property type="entry name" value="NA(+)-TRANSLOCATING NADH-QUINONE REDUCTASE SUBUNIT A"/>
    <property type="match status" value="1"/>
</dbReference>
<dbReference type="PANTHER" id="PTHR37839:SF1">
    <property type="entry name" value="NA(+)-TRANSLOCATING NADH-QUINONE REDUCTASE SUBUNIT A"/>
    <property type="match status" value="1"/>
</dbReference>
<dbReference type="Pfam" id="PF24836">
    <property type="entry name" value="NQRA_2nd"/>
    <property type="match status" value="1"/>
</dbReference>
<dbReference type="Pfam" id="PF05896">
    <property type="entry name" value="NQRA_N"/>
    <property type="match status" value="1"/>
</dbReference>
<dbReference type="Pfam" id="PF11973">
    <property type="entry name" value="NQRA_SLBB"/>
    <property type="match status" value="1"/>
</dbReference>
<organism>
    <name type="scientific">Vibrio alginolyticus</name>
    <dbReference type="NCBI Taxonomy" id="663"/>
    <lineage>
        <taxon>Bacteria</taxon>
        <taxon>Pseudomonadati</taxon>
        <taxon>Pseudomonadota</taxon>
        <taxon>Gammaproteobacteria</taxon>
        <taxon>Vibrionales</taxon>
        <taxon>Vibrionaceae</taxon>
        <taxon>Vibrio</taxon>
    </lineage>
</organism>
<feature type="chain" id="PRO_0000214203" description="Na(+)-translocating NADH-quinone reductase subunit A">
    <location>
        <begin position="1"/>
        <end position="446"/>
    </location>
</feature>
<feature type="sequence conflict" description="In Ref. 4; AA sequence." evidence="6" ref="4">
    <original>W</original>
    <variation>L</variation>
    <location>
        <position position="337"/>
    </location>
</feature>
<reference key="1">
    <citation type="journal article" date="1994" name="FEBS Lett.">
        <title>Cloning and sequencing of four structural genes for the Na(+)-translocating NADH-ubiquinone oxidoreductase of Vibrio alginolyticus.</title>
        <authorList>
            <person name="Beattie P."/>
            <person name="Tan K."/>
            <person name="Bourne R.M."/>
            <person name="Leach D.R.F."/>
            <person name="Rich P.R."/>
            <person name="Ward F.B."/>
        </authorList>
    </citation>
    <scope>NUCLEOTIDE SEQUENCE [GENOMIC DNA]</scope>
    <scope>PROTEIN SEQUENCE OF 1-10</scope>
    <source>
        <strain>NCIMB 11038 / LMG 3418</strain>
    </source>
</reference>
<reference key="2">
    <citation type="submission" date="1997-10" db="EMBL/GenBank/DDBJ databases">
        <authorList>
            <person name="Hayashi M."/>
            <person name="Unemoto T."/>
            <person name="Sugiyama A."/>
        </authorList>
    </citation>
    <scope>NUCLEOTIDE SEQUENCE [GENOMIC DNA]</scope>
</reference>
<reference key="3">
    <citation type="journal article" date="1998" name="FEBS Lett.">
        <title>Identification of six subunits constituting Na+-translocating NADH-quinone reductase from the marine Vibrio alginolyticus.</title>
        <authorList>
            <person name="Nakayama Y."/>
            <person name="Hayashi M."/>
            <person name="Unemoto T."/>
        </authorList>
    </citation>
    <scope>PROTEIN SEQUENCE OF 1-10</scope>
    <scope>CATALYTIC ACTIVITY</scope>
    <scope>SUBUNIT</scope>
</reference>
<reference key="4">
    <citation type="journal article" date="1994" name="FEBS Lett.">
        <title>Cloning of the Na(+)-translocating NADH-quinone reductase gene from the marine bacterium Vibrio alginolyticus and the expression of the beta-subunit in Escherichia coli.</title>
        <authorList>
            <person name="Hayashi M."/>
            <person name="Hirai K."/>
            <person name="Unemoto T."/>
        </authorList>
    </citation>
    <scope>PROTEIN SEQUENCE OF 1-9 AND 334-340</scope>
</reference>
<reference key="5">
    <citation type="journal article" date="1999" name="Biol. Pharm. Bull.">
        <title>Inhibitor studies of a new antibiotic, korormicin, 2-n-heptyl-4-hydroxyquinoline N-oxide and Ag+ toward the Na+-translocating NADH-quinone reductase from the marine Vibrio alginolyticus.</title>
        <authorList>
            <person name="Nakayama Y."/>
            <person name="Hayashi M."/>
            <person name="Yoshikawa K."/>
            <person name="Mochida K."/>
            <person name="Unemoto T."/>
        </authorList>
    </citation>
    <scope>INHIBITION OF ENZYMATIC ACTIVITY</scope>
</reference>
<reference key="6">
    <citation type="journal article" date="2001" name="Biochim. Biophys. Acta">
        <title>Recent progress in the Na(+)-translocating NADH-quinone reductase from the marine Vibrio alginolyticus.</title>
        <authorList>
            <person name="Hayashi M."/>
            <person name="Nakayama Y."/>
            <person name="Unemoto T."/>
        </authorList>
    </citation>
    <scope>REVIEW</scope>
</reference>
<reference key="7">
    <citation type="journal article" date="2001" name="Biochim. Biophys. Acta">
        <title>Na(+) translocation by bacterial NADH:quinone oxidoreductases: an extension to the complex-I family of primary redox pumps.</title>
        <authorList>
            <person name="Steuber J."/>
        </authorList>
    </citation>
    <scope>REVIEW</scope>
</reference>
<keyword id="KW-0903">Direct protein sequencing</keyword>
<keyword id="KW-0406">Ion transport</keyword>
<keyword id="KW-0520">NAD</keyword>
<keyword id="KW-0915">Sodium</keyword>
<keyword id="KW-0739">Sodium transport</keyword>
<keyword id="KW-1278">Translocase</keyword>
<keyword id="KW-0813">Transport</keyword>
<keyword id="KW-0830">Ubiquinone</keyword>
<evidence type="ECO:0000255" key="1">
    <source>
        <dbReference type="HAMAP-Rule" id="MF_00425"/>
    </source>
</evidence>
<evidence type="ECO:0000269" key="2">
    <source>
    </source>
</evidence>
<evidence type="ECO:0000269" key="3">
    <source>
    </source>
</evidence>
<evidence type="ECO:0000303" key="4">
    <source>
    </source>
</evidence>
<evidence type="ECO:0000303" key="5">
    <source>
    </source>
</evidence>
<evidence type="ECO:0000305" key="6"/>
<evidence type="ECO:0000305" key="7">
    <source>
    </source>
</evidence>
<evidence type="ECO:0000305" key="8">
    <source>
    </source>
</evidence>
<sequence length="446" mass="48623">MITIKKGLDLPIAGTPSQVINDGKTIKKVALLGEEYVGMRPTMHVRVGDEVKKAQVLFEDKKNPGVKFTAPAAGKVIEVNRGAKRVLQSVVIEVAGEEQVTFDKFEAAQLSGLDREVIKTQLVDSGLWTALRTRPFSKVPAIESSTKAIFVTAMDTNPLAAKPELIINEQQEAFIAGLDILSALTEGKVYVCKSGTSLPRSSQSNVEEHVFDGPHPAGLAGTHMHFLYPVNAENVAWSINYQDVIAFGKLFLTGELYTDRVVSLAGPVVNNPRLVRTVIGASLDDLTDNELMPGEVRVISGSVLTGTHATGPHAYLGRYHQQVSVLREGREKELFGWAMPGKNKFSVTRSFLGHVFKGQLFNMTTTTNGSDRSMVPIGNYERVMPLDMEPTLLLRDLCAGDTDSAQALGALELDEEDLALCTFVCPGKYEYGTLLRECLDTIEKEG</sequence>